<gene>
    <name evidence="1" type="primary">ihfB</name>
    <name evidence="1" type="synonym">himD</name>
    <name type="ordered locus">BCc_189</name>
</gene>
<organism>
    <name type="scientific">Buchnera aphidicola subsp. Cinara cedri (strain Cc)</name>
    <dbReference type="NCBI Taxonomy" id="372461"/>
    <lineage>
        <taxon>Bacteria</taxon>
        <taxon>Pseudomonadati</taxon>
        <taxon>Pseudomonadota</taxon>
        <taxon>Gammaproteobacteria</taxon>
        <taxon>Enterobacterales</taxon>
        <taxon>Erwiniaceae</taxon>
        <taxon>Buchnera</taxon>
    </lineage>
</organism>
<dbReference type="EMBL" id="CP000263">
    <property type="protein sequence ID" value="ABJ90661.1"/>
    <property type="molecule type" value="Genomic_DNA"/>
</dbReference>
<dbReference type="RefSeq" id="WP_011672580.1">
    <property type="nucleotide sequence ID" value="NC_008513.1"/>
</dbReference>
<dbReference type="SMR" id="Q057N8"/>
<dbReference type="STRING" id="372461.BCc_189"/>
<dbReference type="KEGG" id="bcc:BCc_189"/>
<dbReference type="eggNOG" id="COG0776">
    <property type="taxonomic scope" value="Bacteria"/>
</dbReference>
<dbReference type="HOGENOM" id="CLU_105066_2_0_6"/>
<dbReference type="OrthoDB" id="9804203at2"/>
<dbReference type="Proteomes" id="UP000000669">
    <property type="component" value="Chromosome"/>
</dbReference>
<dbReference type="GO" id="GO:0005694">
    <property type="term" value="C:chromosome"/>
    <property type="evidence" value="ECO:0007669"/>
    <property type="project" value="InterPro"/>
</dbReference>
<dbReference type="GO" id="GO:0005829">
    <property type="term" value="C:cytosol"/>
    <property type="evidence" value="ECO:0007669"/>
    <property type="project" value="TreeGrafter"/>
</dbReference>
<dbReference type="GO" id="GO:0003677">
    <property type="term" value="F:DNA binding"/>
    <property type="evidence" value="ECO:0007669"/>
    <property type="project" value="UniProtKB-UniRule"/>
</dbReference>
<dbReference type="GO" id="GO:0030527">
    <property type="term" value="F:structural constituent of chromatin"/>
    <property type="evidence" value="ECO:0007669"/>
    <property type="project" value="InterPro"/>
</dbReference>
<dbReference type="GO" id="GO:0006310">
    <property type="term" value="P:DNA recombination"/>
    <property type="evidence" value="ECO:0007669"/>
    <property type="project" value="UniProtKB-UniRule"/>
</dbReference>
<dbReference type="GO" id="GO:0006355">
    <property type="term" value="P:regulation of DNA-templated transcription"/>
    <property type="evidence" value="ECO:0007669"/>
    <property type="project" value="UniProtKB-UniRule"/>
</dbReference>
<dbReference type="GO" id="GO:0006417">
    <property type="term" value="P:regulation of translation"/>
    <property type="evidence" value="ECO:0007669"/>
    <property type="project" value="UniProtKB-UniRule"/>
</dbReference>
<dbReference type="CDD" id="cd13836">
    <property type="entry name" value="IHF_B"/>
    <property type="match status" value="1"/>
</dbReference>
<dbReference type="FunFam" id="4.10.520.10:FF:000003">
    <property type="entry name" value="Integration host factor subunit beta"/>
    <property type="match status" value="1"/>
</dbReference>
<dbReference type="Gene3D" id="4.10.520.10">
    <property type="entry name" value="IHF-like DNA-binding proteins"/>
    <property type="match status" value="1"/>
</dbReference>
<dbReference type="HAMAP" id="MF_00381">
    <property type="entry name" value="IHF_beta"/>
    <property type="match status" value="1"/>
</dbReference>
<dbReference type="InterPro" id="IPR000119">
    <property type="entry name" value="Hist_DNA-bd"/>
</dbReference>
<dbReference type="InterPro" id="IPR020816">
    <property type="entry name" value="Histone-like_DNA-bd_CS"/>
</dbReference>
<dbReference type="InterPro" id="IPR010992">
    <property type="entry name" value="IHF-like_DNA-bd_dom_sf"/>
</dbReference>
<dbReference type="InterPro" id="IPR005685">
    <property type="entry name" value="IHF_beta"/>
</dbReference>
<dbReference type="NCBIfam" id="TIGR00988">
    <property type="entry name" value="hip"/>
    <property type="match status" value="1"/>
</dbReference>
<dbReference type="NCBIfam" id="NF001222">
    <property type="entry name" value="PRK00199.1"/>
    <property type="match status" value="1"/>
</dbReference>
<dbReference type="PANTHER" id="PTHR33175">
    <property type="entry name" value="DNA-BINDING PROTEIN HU"/>
    <property type="match status" value="1"/>
</dbReference>
<dbReference type="PANTHER" id="PTHR33175:SF5">
    <property type="entry name" value="INTEGRATION HOST FACTOR SUBUNIT BETA"/>
    <property type="match status" value="1"/>
</dbReference>
<dbReference type="Pfam" id="PF00216">
    <property type="entry name" value="Bac_DNA_binding"/>
    <property type="match status" value="1"/>
</dbReference>
<dbReference type="PRINTS" id="PR01727">
    <property type="entry name" value="DNABINDINGHU"/>
</dbReference>
<dbReference type="SMART" id="SM00411">
    <property type="entry name" value="BHL"/>
    <property type="match status" value="1"/>
</dbReference>
<dbReference type="SUPFAM" id="SSF47729">
    <property type="entry name" value="IHF-like DNA-binding proteins"/>
    <property type="match status" value="1"/>
</dbReference>
<dbReference type="PROSITE" id="PS00045">
    <property type="entry name" value="HISTONE_LIKE"/>
    <property type="match status" value="1"/>
</dbReference>
<name>IHFB_BUCCC</name>
<protein>
    <recommendedName>
        <fullName evidence="1">Integration host factor subunit beta</fullName>
        <shortName evidence="1">IHF-beta</shortName>
    </recommendedName>
</protein>
<proteinExistence type="inferred from homology"/>
<sequence>MIKSELFERITEKKTYIPAKIIEYVVKNILEYMSLSLEKGNRIEIRGFGSFSLHYRFARIGRNPKTGEKVYLKEKYVPHFKPGKQLRDRINNIYKKI</sequence>
<accession>Q057N8</accession>
<reference key="1">
    <citation type="journal article" date="2006" name="Science">
        <title>A small microbial genome: the end of a long symbiotic relationship?</title>
        <authorList>
            <person name="Perez-Brocal V."/>
            <person name="Gil R."/>
            <person name="Ramos S."/>
            <person name="Lamelas A."/>
            <person name="Postigo M."/>
            <person name="Michelena J.M."/>
            <person name="Silva F.J."/>
            <person name="Moya A."/>
            <person name="Latorre A."/>
        </authorList>
    </citation>
    <scope>NUCLEOTIDE SEQUENCE [LARGE SCALE GENOMIC DNA]</scope>
    <source>
        <strain>Cc</strain>
    </source>
</reference>
<feature type="chain" id="PRO_1000060592" description="Integration host factor subunit beta">
    <location>
        <begin position="1"/>
        <end position="97"/>
    </location>
</feature>
<keyword id="KW-0233">DNA recombination</keyword>
<keyword id="KW-0238">DNA-binding</keyword>
<keyword id="KW-1185">Reference proteome</keyword>
<keyword id="KW-0804">Transcription</keyword>
<keyword id="KW-0805">Transcription regulation</keyword>
<keyword id="KW-0810">Translation regulation</keyword>
<evidence type="ECO:0000255" key="1">
    <source>
        <dbReference type="HAMAP-Rule" id="MF_00381"/>
    </source>
</evidence>
<comment type="function">
    <text evidence="1">This protein is one of the two subunits of integration host factor, a specific DNA-binding protein that functions in genetic recombination as well as in transcriptional and translational control.</text>
</comment>
<comment type="subunit">
    <text evidence="1">Heterodimer of an alpha and a beta chain.</text>
</comment>
<comment type="similarity">
    <text evidence="1">Belongs to the bacterial histone-like protein family.</text>
</comment>